<keyword id="KW-0002">3D-structure</keyword>
<keyword id="KW-0938">Abscisic acid signaling pathway</keyword>
<keyword id="KW-1003">Cell membrane</keyword>
<keyword id="KW-0449">Lipoprotein</keyword>
<keyword id="KW-0472">Membrane</keyword>
<keyword id="KW-0479">Metal-binding</keyword>
<keyword id="KW-0519">Myristate</keyword>
<keyword id="KW-0539">Nucleus</keyword>
<keyword id="KW-1185">Reference proteome</keyword>
<keyword id="KW-0346">Stress response</keyword>
<keyword id="KW-0808">Transferase</keyword>
<keyword id="KW-0833">Ubl conjugation pathway</keyword>
<keyword id="KW-0862">Zinc</keyword>
<keyword id="KW-0863">Zinc-finger</keyword>
<reference key="1">
    <citation type="journal article" date="2005" name="Plant Physiol.">
        <title>Functional analysis of the RING-type ubiquitin ligase family of Arabidopsis.</title>
        <authorList>
            <person name="Stone S.L."/>
            <person name="Hauksdottir H."/>
            <person name="Troy A."/>
            <person name="Herschleb J."/>
            <person name="Kraft E."/>
            <person name="Callis J."/>
        </authorList>
    </citation>
    <scope>NUCLEOTIDE SEQUENCE [MRNA]</scope>
    <source>
        <strain>cv. Columbia</strain>
    </source>
</reference>
<reference key="2">
    <citation type="journal article" date="2000" name="Nature">
        <title>Sequence and analysis of chromosome 5 of the plant Arabidopsis thaliana.</title>
        <authorList>
            <person name="Tabata S."/>
            <person name="Kaneko T."/>
            <person name="Nakamura Y."/>
            <person name="Kotani H."/>
            <person name="Kato T."/>
            <person name="Asamizu E."/>
            <person name="Miyajima N."/>
            <person name="Sasamoto S."/>
            <person name="Kimura T."/>
            <person name="Hosouchi T."/>
            <person name="Kawashima K."/>
            <person name="Kohara M."/>
            <person name="Matsumoto M."/>
            <person name="Matsuno A."/>
            <person name="Muraki A."/>
            <person name="Nakayama S."/>
            <person name="Nakazaki N."/>
            <person name="Naruo K."/>
            <person name="Okumura S."/>
            <person name="Shinpo S."/>
            <person name="Takeuchi C."/>
            <person name="Wada T."/>
            <person name="Watanabe A."/>
            <person name="Yamada M."/>
            <person name="Yasuda M."/>
            <person name="Sato S."/>
            <person name="de la Bastide M."/>
            <person name="Huang E."/>
            <person name="Spiegel L."/>
            <person name="Gnoj L."/>
            <person name="O'Shaughnessy A."/>
            <person name="Preston R."/>
            <person name="Habermann K."/>
            <person name="Murray J."/>
            <person name="Johnson D."/>
            <person name="Rohlfing T."/>
            <person name="Nelson J."/>
            <person name="Stoneking T."/>
            <person name="Pepin K."/>
            <person name="Spieth J."/>
            <person name="Sekhon M."/>
            <person name="Armstrong J."/>
            <person name="Becker M."/>
            <person name="Belter E."/>
            <person name="Cordum H."/>
            <person name="Cordes M."/>
            <person name="Courtney L."/>
            <person name="Courtney W."/>
            <person name="Dante M."/>
            <person name="Du H."/>
            <person name="Edwards J."/>
            <person name="Fryman J."/>
            <person name="Haakensen B."/>
            <person name="Lamar E."/>
            <person name="Latreille P."/>
            <person name="Leonard S."/>
            <person name="Meyer R."/>
            <person name="Mulvaney E."/>
            <person name="Ozersky P."/>
            <person name="Riley A."/>
            <person name="Strowmatt C."/>
            <person name="Wagner-McPherson C."/>
            <person name="Wollam A."/>
            <person name="Yoakum M."/>
            <person name="Bell M."/>
            <person name="Dedhia N."/>
            <person name="Parnell L."/>
            <person name="Shah R."/>
            <person name="Rodriguez M."/>
            <person name="Hoon See L."/>
            <person name="Vil D."/>
            <person name="Baker J."/>
            <person name="Kirchoff K."/>
            <person name="Toth K."/>
            <person name="King L."/>
            <person name="Bahret A."/>
            <person name="Miller B."/>
            <person name="Marra M.A."/>
            <person name="Martienssen R."/>
            <person name="McCombie W.R."/>
            <person name="Wilson R.K."/>
            <person name="Murphy G."/>
            <person name="Bancroft I."/>
            <person name="Volckaert G."/>
            <person name="Wambutt R."/>
            <person name="Duesterhoeft A."/>
            <person name="Stiekema W."/>
            <person name="Pohl T."/>
            <person name="Entian K.-D."/>
            <person name="Terryn N."/>
            <person name="Hartley N."/>
            <person name="Bent E."/>
            <person name="Johnson S."/>
            <person name="Langham S.-A."/>
            <person name="McCullagh B."/>
            <person name="Robben J."/>
            <person name="Grymonprez B."/>
            <person name="Zimmermann W."/>
            <person name="Ramsperger U."/>
            <person name="Wedler H."/>
            <person name="Balke K."/>
            <person name="Wedler E."/>
            <person name="Peters S."/>
            <person name="van Staveren M."/>
            <person name="Dirkse W."/>
            <person name="Mooijman P."/>
            <person name="Klein Lankhorst R."/>
            <person name="Weitzenegger T."/>
            <person name="Bothe G."/>
            <person name="Rose M."/>
            <person name="Hauf J."/>
            <person name="Berneiser S."/>
            <person name="Hempel S."/>
            <person name="Feldpausch M."/>
            <person name="Lamberth S."/>
            <person name="Villarroel R."/>
            <person name="Gielen J."/>
            <person name="Ardiles W."/>
            <person name="Bents O."/>
            <person name="Lemcke K."/>
            <person name="Kolesov G."/>
            <person name="Mayer K.F.X."/>
            <person name="Rudd S."/>
            <person name="Schoof H."/>
            <person name="Schueller C."/>
            <person name="Zaccaria P."/>
            <person name="Mewes H.-W."/>
            <person name="Bevan M."/>
            <person name="Fransz P.F."/>
        </authorList>
    </citation>
    <scope>NUCLEOTIDE SEQUENCE [LARGE SCALE GENOMIC DNA]</scope>
    <source>
        <strain>cv. Columbia</strain>
    </source>
</reference>
<reference key="3">
    <citation type="journal article" date="2017" name="Plant J.">
        <title>Araport11: a complete reannotation of the Arabidopsis thaliana reference genome.</title>
        <authorList>
            <person name="Cheng C.Y."/>
            <person name="Krishnakumar V."/>
            <person name="Chan A.P."/>
            <person name="Thibaud-Nissen F."/>
            <person name="Schobel S."/>
            <person name="Town C.D."/>
        </authorList>
    </citation>
    <scope>GENOME REANNOTATION</scope>
    <source>
        <strain>cv. Columbia</strain>
    </source>
</reference>
<reference key="4">
    <citation type="journal article" date="2003" name="Science">
        <title>Empirical analysis of transcriptional activity in the Arabidopsis genome.</title>
        <authorList>
            <person name="Yamada K."/>
            <person name="Lim J."/>
            <person name="Dale J.M."/>
            <person name="Chen H."/>
            <person name="Shinn P."/>
            <person name="Palm C.J."/>
            <person name="Southwick A.M."/>
            <person name="Wu H.C."/>
            <person name="Kim C.J."/>
            <person name="Nguyen M."/>
            <person name="Pham P.K."/>
            <person name="Cheuk R.F."/>
            <person name="Karlin-Newmann G."/>
            <person name="Liu S.X."/>
            <person name="Lam B."/>
            <person name="Sakano H."/>
            <person name="Wu T."/>
            <person name="Yu G."/>
            <person name="Miranda M."/>
            <person name="Quach H.L."/>
            <person name="Tripp M."/>
            <person name="Chang C.H."/>
            <person name="Lee J.M."/>
            <person name="Toriumi M.J."/>
            <person name="Chan M.M."/>
            <person name="Tang C.C."/>
            <person name="Onodera C.S."/>
            <person name="Deng J.M."/>
            <person name="Akiyama K."/>
            <person name="Ansari Y."/>
            <person name="Arakawa T."/>
            <person name="Banh J."/>
            <person name="Banno F."/>
            <person name="Bowser L."/>
            <person name="Brooks S.Y."/>
            <person name="Carninci P."/>
            <person name="Chao Q."/>
            <person name="Choy N."/>
            <person name="Enju A."/>
            <person name="Goldsmith A.D."/>
            <person name="Gurjal M."/>
            <person name="Hansen N.F."/>
            <person name="Hayashizaki Y."/>
            <person name="Johnson-Hopson C."/>
            <person name="Hsuan V.W."/>
            <person name="Iida K."/>
            <person name="Karnes M."/>
            <person name="Khan S."/>
            <person name="Koesema E."/>
            <person name="Ishida J."/>
            <person name="Jiang P.X."/>
            <person name="Jones T."/>
            <person name="Kawai J."/>
            <person name="Kamiya A."/>
            <person name="Meyers C."/>
            <person name="Nakajima M."/>
            <person name="Narusaka M."/>
            <person name="Seki M."/>
            <person name="Sakurai T."/>
            <person name="Satou M."/>
            <person name="Tamse R."/>
            <person name="Vaysberg M."/>
            <person name="Wallender E.K."/>
            <person name="Wong C."/>
            <person name="Yamamura Y."/>
            <person name="Yuan S."/>
            <person name="Shinozaki K."/>
            <person name="Davis R.W."/>
            <person name="Theologis A."/>
            <person name="Ecker J.R."/>
        </authorList>
    </citation>
    <scope>NUCLEOTIDE SEQUENCE [LARGE SCALE MRNA]</scope>
    <source>
        <strain>cv. Columbia</strain>
    </source>
</reference>
<reference key="5">
    <citation type="journal article" date="2007" name="Plant Cell">
        <title>Ubiquitin lysine 63 chain forming ligases regulate apical dominance in Arabidopsis.</title>
        <authorList>
            <person name="Yin X.-J."/>
            <person name="Volk S."/>
            <person name="Ljung K."/>
            <person name="Mehlmer N."/>
            <person name="Dolezal K."/>
            <person name="Ditengou F."/>
            <person name="Hanano S."/>
            <person name="Davis S.J."/>
            <person name="Schmelzer E."/>
            <person name="Sandberg G."/>
            <person name="Teige M."/>
            <person name="Palme K."/>
            <person name="Pickart C."/>
            <person name="Bachmair A."/>
        </authorList>
    </citation>
    <scope>IDENTIFICATION</scope>
    <scope>FUNCTION</scope>
    <scope>TISSUE SPECIFICITY</scope>
    <scope>MYRISTOYLATION AT GLY-2</scope>
    <scope>MUTAGENESIS OF GLY-2</scope>
    <scope>INTERACTION WITH UBC35 AND PIN1</scope>
    <scope>DISRUPTION PHENOTYPE</scope>
</reference>
<reference key="6">
    <citation type="journal article" date="2007" name="Mol. Cell. Proteomics">
        <title>Multidimensional protein identification technology (MudPIT) analysis of ubiquitinated proteins in plants.</title>
        <authorList>
            <person name="Maor R."/>
            <person name="Jones A."/>
            <person name="Nuehse T.S."/>
            <person name="Studholme D.J."/>
            <person name="Peck S.C."/>
            <person name="Shirasu K."/>
        </authorList>
    </citation>
    <scope>IDENTIFICATION BY MASS SPECTROMETRY [LARGE SCALE ANALYSIS]</scope>
    <source>
        <strain>cv. Landsberg erecta</strain>
    </source>
</reference>
<reference key="7">
    <citation type="journal article" date="2012" name="Plant Physiol.">
        <title>Arabidopsis RGLG2, functioning as a RING E3 ligase, interacts with AtERF53 and negatively regulates the plant drought stress response.</title>
        <authorList>
            <person name="Cheng M.C."/>
            <person name="Hsieh E.J."/>
            <person name="Chen J.H."/>
            <person name="Chen H.Y."/>
            <person name="Lin T.P."/>
        </authorList>
    </citation>
    <scope>FUNCTION</scope>
    <scope>INTERACTION WITH ERF053</scope>
    <scope>SUBCELLULAR LOCATION</scope>
    <scope>DISRUPTION PHENOTYPE</scope>
</reference>
<organism>
    <name type="scientific">Arabidopsis thaliana</name>
    <name type="common">Mouse-ear cress</name>
    <dbReference type="NCBI Taxonomy" id="3702"/>
    <lineage>
        <taxon>Eukaryota</taxon>
        <taxon>Viridiplantae</taxon>
        <taxon>Streptophyta</taxon>
        <taxon>Embryophyta</taxon>
        <taxon>Tracheophyta</taxon>
        <taxon>Spermatophyta</taxon>
        <taxon>Magnoliopsida</taxon>
        <taxon>eudicotyledons</taxon>
        <taxon>Gunneridae</taxon>
        <taxon>Pentapetalae</taxon>
        <taxon>rosids</taxon>
        <taxon>malvids</taxon>
        <taxon>Brassicales</taxon>
        <taxon>Brassicaceae</taxon>
        <taxon>Camelineae</taxon>
        <taxon>Arabidopsis</taxon>
    </lineage>
</organism>
<name>RGLG2_ARATH</name>
<accession>Q9LY87</accession>
<sequence length="468" mass="51578">MGTGNSKENWRQSSFRSTSASSASPSSSSWASQQSYPQYGAESYNYPPPPSYAQPPEYTQPPPPLYSTQPYSAPSYSAPPSQSYGSDNKKRLERKYSKISDDYSSLEQVTEALARAGLESSNLIVGIDFTKSNEWTGARSFNRKSLHFIGSSPNPYEQAITIIGRTLAAFDEDNLIPCYGFGDASTHDQDVFSFNSEDRFCNGFEEVLSRYKEIVPQLKLAGPTSFAPIIDMAMTIVEQSGGQYHVLVIIADGQVTRSVDTENGQLSPQEQKTVDAIVQASKLPLSIVLVGVGDGPWDMMREFDDNIPARAFDNFQFVNFTEIMAKNKAQSLKETEFALSALMEIPQQYKATIELNLLGRRNGYIPERFPLPPPMRGGSSSYNSPKPSRLPSFKPSVPPHPTEGYHVRSSPVPPPTSSASDNQLCPICLSNPKDMAFGCGHQTCCECGPDLQMCPICRAPIQTRIKLY</sequence>
<protein>
    <recommendedName>
        <fullName evidence="7">E3 ubiquitin-protein ligase RGLG2</fullName>
        <ecNumber evidence="7">2.3.2.27</ecNumber>
    </recommendedName>
    <alternativeName>
        <fullName evidence="6">RING domain ligase 2</fullName>
    </alternativeName>
</protein>
<proteinExistence type="evidence at protein level"/>
<gene>
    <name evidence="6" type="primary">RGLG2</name>
    <name type="ordered locus">At5g14420</name>
    <name type="ORF">F18O22.210</name>
</gene>
<dbReference type="EC" id="2.3.2.27" evidence="7"/>
<dbReference type="EMBL" id="DQ086862">
    <property type="protein sequence ID" value="AAZ14078.1"/>
    <property type="molecule type" value="mRNA"/>
</dbReference>
<dbReference type="EMBL" id="AL163817">
    <property type="protein sequence ID" value="CAB87781.1"/>
    <property type="molecule type" value="Genomic_DNA"/>
</dbReference>
<dbReference type="EMBL" id="CP002688">
    <property type="protein sequence ID" value="AED92028.1"/>
    <property type="molecule type" value="Genomic_DNA"/>
</dbReference>
<dbReference type="EMBL" id="CP002688">
    <property type="protein sequence ID" value="AED92029.1"/>
    <property type="molecule type" value="Genomic_DNA"/>
</dbReference>
<dbReference type="EMBL" id="CP002688">
    <property type="protein sequence ID" value="AED92030.1"/>
    <property type="molecule type" value="Genomic_DNA"/>
</dbReference>
<dbReference type="EMBL" id="CP002688">
    <property type="protein sequence ID" value="AED92031.1"/>
    <property type="molecule type" value="Genomic_DNA"/>
</dbReference>
<dbReference type="EMBL" id="AY099597">
    <property type="protein sequence ID" value="AAM20448.1"/>
    <property type="molecule type" value="mRNA"/>
</dbReference>
<dbReference type="EMBL" id="BT000249">
    <property type="protein sequence ID" value="AAN15568.1"/>
    <property type="molecule type" value="mRNA"/>
</dbReference>
<dbReference type="PIR" id="T48615">
    <property type="entry name" value="T48615"/>
</dbReference>
<dbReference type="RefSeq" id="NP_196946.1">
    <property type="nucleotide sequence ID" value="NM_121446.5"/>
</dbReference>
<dbReference type="RefSeq" id="NP_850818.1">
    <property type="nucleotide sequence ID" value="NM_180487.4"/>
</dbReference>
<dbReference type="RefSeq" id="NP_974779.1">
    <property type="nucleotide sequence ID" value="NM_203050.3"/>
</dbReference>
<dbReference type="RefSeq" id="NP_974780.1">
    <property type="nucleotide sequence ID" value="NM_203051.3"/>
</dbReference>
<dbReference type="PDB" id="8HMG">
    <property type="method" value="X-ray"/>
    <property type="resolution" value="2.81 A"/>
    <property type="chains" value="A/B/C/D/E/F/G/H/I=86-380"/>
</dbReference>
<dbReference type="PDB" id="8HMH">
    <property type="method" value="X-ray"/>
    <property type="resolution" value="2.56 A"/>
    <property type="chains" value="A/B=86-380"/>
</dbReference>
<dbReference type="PDBsum" id="8HMG"/>
<dbReference type="PDBsum" id="8HMH"/>
<dbReference type="SMR" id="Q9LY87"/>
<dbReference type="BioGRID" id="16570">
    <property type="interactions" value="3"/>
</dbReference>
<dbReference type="FunCoup" id="Q9LY87">
    <property type="interactions" value="351"/>
</dbReference>
<dbReference type="STRING" id="3702.Q9LY87"/>
<dbReference type="GlyGen" id="Q9LY87">
    <property type="glycosylation" value="2 sites"/>
</dbReference>
<dbReference type="iPTMnet" id="Q9LY87"/>
<dbReference type="PaxDb" id="3702-AT5G14420.2"/>
<dbReference type="ProteomicsDB" id="236236"/>
<dbReference type="EnsemblPlants" id="AT5G14420.1">
    <property type="protein sequence ID" value="AT5G14420.1"/>
    <property type="gene ID" value="AT5G14420"/>
</dbReference>
<dbReference type="EnsemblPlants" id="AT5G14420.2">
    <property type="protein sequence ID" value="AT5G14420.2"/>
    <property type="gene ID" value="AT5G14420"/>
</dbReference>
<dbReference type="EnsemblPlants" id="AT5G14420.3">
    <property type="protein sequence ID" value="AT5G14420.3"/>
    <property type="gene ID" value="AT5G14420"/>
</dbReference>
<dbReference type="EnsemblPlants" id="AT5G14420.4">
    <property type="protein sequence ID" value="AT5G14420.4"/>
    <property type="gene ID" value="AT5G14420"/>
</dbReference>
<dbReference type="GeneID" id="831293"/>
<dbReference type="Gramene" id="AT5G14420.1">
    <property type="protein sequence ID" value="AT5G14420.1"/>
    <property type="gene ID" value="AT5G14420"/>
</dbReference>
<dbReference type="Gramene" id="AT5G14420.2">
    <property type="protein sequence ID" value="AT5G14420.2"/>
    <property type="gene ID" value="AT5G14420"/>
</dbReference>
<dbReference type="Gramene" id="AT5G14420.3">
    <property type="protein sequence ID" value="AT5G14420.3"/>
    <property type="gene ID" value="AT5G14420"/>
</dbReference>
<dbReference type="Gramene" id="AT5G14420.4">
    <property type="protein sequence ID" value="AT5G14420.4"/>
    <property type="gene ID" value="AT5G14420"/>
</dbReference>
<dbReference type="KEGG" id="ath:AT5G14420"/>
<dbReference type="Araport" id="AT5G14420"/>
<dbReference type="TAIR" id="AT5G14420">
    <property type="gene designation" value="RGLG2"/>
</dbReference>
<dbReference type="eggNOG" id="KOG1327">
    <property type="taxonomic scope" value="Eukaryota"/>
</dbReference>
<dbReference type="HOGENOM" id="CLU_035766_1_0_1"/>
<dbReference type="InParanoid" id="Q9LY87"/>
<dbReference type="OMA" id="NNKPKAN"/>
<dbReference type="PhylomeDB" id="Q9LY87"/>
<dbReference type="BRENDA" id="2.3.2.27">
    <property type="organism ID" value="399"/>
</dbReference>
<dbReference type="PRO" id="PR:Q9LY87"/>
<dbReference type="Proteomes" id="UP000006548">
    <property type="component" value="Chromosome 5"/>
</dbReference>
<dbReference type="ExpressionAtlas" id="Q9LY87">
    <property type="expression patterns" value="baseline and differential"/>
</dbReference>
<dbReference type="GO" id="GO:0005634">
    <property type="term" value="C:nucleus"/>
    <property type="evidence" value="ECO:0000314"/>
    <property type="project" value="TAIR"/>
</dbReference>
<dbReference type="GO" id="GO:0005886">
    <property type="term" value="C:plasma membrane"/>
    <property type="evidence" value="ECO:0000314"/>
    <property type="project" value="TAIR"/>
</dbReference>
<dbReference type="GO" id="GO:0061630">
    <property type="term" value="F:ubiquitin protein ligase activity"/>
    <property type="evidence" value="ECO:0007669"/>
    <property type="project" value="InterPro"/>
</dbReference>
<dbReference type="GO" id="GO:0004842">
    <property type="term" value="F:ubiquitin-protein transferase activity"/>
    <property type="evidence" value="ECO:0000314"/>
    <property type="project" value="TAIR"/>
</dbReference>
<dbReference type="GO" id="GO:0008270">
    <property type="term" value="F:zinc ion binding"/>
    <property type="evidence" value="ECO:0007669"/>
    <property type="project" value="UniProtKB-KW"/>
</dbReference>
<dbReference type="GO" id="GO:0009738">
    <property type="term" value="P:abscisic acid-activated signaling pathway"/>
    <property type="evidence" value="ECO:0007669"/>
    <property type="project" value="UniProtKB-KW"/>
</dbReference>
<dbReference type="GO" id="GO:0009850">
    <property type="term" value="P:auxin metabolic process"/>
    <property type="evidence" value="ECO:0000316"/>
    <property type="project" value="TAIR"/>
</dbReference>
<dbReference type="GO" id="GO:0009690">
    <property type="term" value="P:cytokinin metabolic process"/>
    <property type="evidence" value="ECO:0000316"/>
    <property type="project" value="TAIR"/>
</dbReference>
<dbReference type="GO" id="GO:0080148">
    <property type="term" value="P:negative regulation of response to water deprivation"/>
    <property type="evidence" value="ECO:0000316"/>
    <property type="project" value="TAIR"/>
</dbReference>
<dbReference type="GO" id="GO:0070534">
    <property type="term" value="P:protein K63-linked ubiquitination"/>
    <property type="evidence" value="ECO:0007669"/>
    <property type="project" value="InterPro"/>
</dbReference>
<dbReference type="CDD" id="cd16729">
    <property type="entry name" value="RING-HC_RGLG_plant"/>
    <property type="match status" value="1"/>
</dbReference>
<dbReference type="FunFam" id="3.30.40.10:FF:000657">
    <property type="entry name" value="E3 ubiquitin-protein ligase RGLG1"/>
    <property type="match status" value="1"/>
</dbReference>
<dbReference type="Gene3D" id="3.30.40.10">
    <property type="entry name" value="Zinc/RING finger domain, C3HC4 (zinc finger)"/>
    <property type="match status" value="1"/>
</dbReference>
<dbReference type="InterPro" id="IPR010734">
    <property type="entry name" value="Copine_C"/>
</dbReference>
<dbReference type="InterPro" id="IPR052079">
    <property type="entry name" value="E3_ligase/Copine_domain"/>
</dbReference>
<dbReference type="InterPro" id="IPR045317">
    <property type="entry name" value="RING-HC_RGLG1/2"/>
</dbReference>
<dbReference type="InterPro" id="IPR002035">
    <property type="entry name" value="VWF_A"/>
</dbReference>
<dbReference type="InterPro" id="IPR036465">
    <property type="entry name" value="vWFA_dom_sf"/>
</dbReference>
<dbReference type="InterPro" id="IPR001841">
    <property type="entry name" value="Znf_RING"/>
</dbReference>
<dbReference type="InterPro" id="IPR013083">
    <property type="entry name" value="Znf_RING/FYVE/PHD"/>
</dbReference>
<dbReference type="PANTHER" id="PTHR45751">
    <property type="entry name" value="COPINE FAMILY PROTEIN 1"/>
    <property type="match status" value="1"/>
</dbReference>
<dbReference type="PANTHER" id="PTHR45751:SF29">
    <property type="entry name" value="E3 UBIQUITIN-PROTEIN LIGASE RGLG2"/>
    <property type="match status" value="1"/>
</dbReference>
<dbReference type="Pfam" id="PF07002">
    <property type="entry name" value="Copine"/>
    <property type="match status" value="1"/>
</dbReference>
<dbReference type="Pfam" id="PF13920">
    <property type="entry name" value="zf-C3HC4_3"/>
    <property type="match status" value="1"/>
</dbReference>
<dbReference type="SMART" id="SM00327">
    <property type="entry name" value="VWA"/>
    <property type="match status" value="1"/>
</dbReference>
<dbReference type="SUPFAM" id="SSF57850">
    <property type="entry name" value="RING/U-box"/>
    <property type="match status" value="1"/>
</dbReference>
<dbReference type="SUPFAM" id="SSF53300">
    <property type="entry name" value="vWA-like"/>
    <property type="match status" value="1"/>
</dbReference>
<dbReference type="PROSITE" id="PS50089">
    <property type="entry name" value="ZF_RING_2"/>
    <property type="match status" value="1"/>
</dbReference>
<evidence type="ECO:0000255" key="1">
    <source>
        <dbReference type="PROSITE-ProRule" id="PRU00175"/>
    </source>
</evidence>
<evidence type="ECO:0000255" key="2">
    <source>
        <dbReference type="PROSITE-ProRule" id="PRU00219"/>
    </source>
</evidence>
<evidence type="ECO:0000256" key="3">
    <source>
        <dbReference type="SAM" id="MobiDB-lite"/>
    </source>
</evidence>
<evidence type="ECO:0000269" key="4">
    <source>
    </source>
</evidence>
<evidence type="ECO:0000269" key="5">
    <source>
    </source>
</evidence>
<evidence type="ECO:0000303" key="6">
    <source>
    </source>
</evidence>
<evidence type="ECO:0000305" key="7"/>
<evidence type="ECO:0000305" key="8">
    <source>
    </source>
</evidence>
<evidence type="ECO:0007829" key="9">
    <source>
        <dbReference type="PDB" id="8HMH"/>
    </source>
</evidence>
<feature type="initiator methionine" description="Removed" evidence="8">
    <location>
        <position position="1"/>
    </location>
</feature>
<feature type="chain" id="PRO_0000344784" description="E3 ubiquitin-protein ligase RGLG2">
    <location>
        <begin position="2"/>
        <end position="468"/>
    </location>
</feature>
<feature type="domain" description="VWFA" evidence="2">
    <location>
        <begin position="122"/>
        <end position="342"/>
    </location>
</feature>
<feature type="zinc finger region" description="RING-type" evidence="1">
    <location>
        <begin position="425"/>
        <end position="458"/>
    </location>
</feature>
<feature type="region of interest" description="Disordered" evidence="3">
    <location>
        <begin position="1"/>
        <end position="89"/>
    </location>
</feature>
<feature type="region of interest" description="Disordered" evidence="3">
    <location>
        <begin position="369"/>
        <end position="416"/>
    </location>
</feature>
<feature type="compositionally biased region" description="Low complexity" evidence="3">
    <location>
        <begin position="12"/>
        <end position="45"/>
    </location>
</feature>
<feature type="compositionally biased region" description="Pro residues" evidence="3">
    <location>
        <begin position="46"/>
        <end position="65"/>
    </location>
</feature>
<feature type="compositionally biased region" description="Low complexity" evidence="3">
    <location>
        <begin position="66"/>
        <end position="84"/>
    </location>
</feature>
<feature type="lipid moiety-binding region" description="N-myristoyl glycine" evidence="8">
    <location>
        <position position="2"/>
    </location>
</feature>
<feature type="mutagenesis site" description="Loss of myristoylation." evidence="4">
    <original>G</original>
    <variation>A</variation>
    <location>
        <position position="2"/>
    </location>
</feature>
<feature type="helix" evidence="9">
    <location>
        <begin position="106"/>
        <end position="115"/>
    </location>
</feature>
<feature type="strand" evidence="9">
    <location>
        <begin position="122"/>
        <end position="128"/>
    </location>
</feature>
<feature type="helix" evidence="9">
    <location>
        <begin position="131"/>
        <end position="134"/>
    </location>
</feature>
<feature type="turn" evidence="9">
    <location>
        <begin position="135"/>
        <end position="143"/>
    </location>
</feature>
<feature type="strand" evidence="9">
    <location>
        <begin position="150"/>
        <end position="152"/>
    </location>
</feature>
<feature type="helix" evidence="9">
    <location>
        <begin position="155"/>
        <end position="167"/>
    </location>
</feature>
<feature type="helix" evidence="9">
    <location>
        <begin position="168"/>
        <end position="170"/>
    </location>
</feature>
<feature type="strand" evidence="9">
    <location>
        <begin position="178"/>
        <end position="183"/>
    </location>
</feature>
<feature type="turn" evidence="9">
    <location>
        <begin position="184"/>
        <end position="189"/>
    </location>
</feature>
<feature type="strand" evidence="9">
    <location>
        <begin position="192"/>
        <end position="195"/>
    </location>
</feature>
<feature type="helix" evidence="9">
    <location>
        <begin position="196"/>
        <end position="198"/>
    </location>
</feature>
<feature type="helix" evidence="9">
    <location>
        <begin position="203"/>
        <end position="214"/>
    </location>
</feature>
<feature type="helix" evidence="9">
    <location>
        <begin position="215"/>
        <end position="217"/>
    </location>
</feature>
<feature type="helix" evidence="9">
    <location>
        <begin position="227"/>
        <end position="239"/>
    </location>
</feature>
<feature type="strand" evidence="9">
    <location>
        <begin position="245"/>
        <end position="253"/>
    </location>
</feature>
<feature type="helix" evidence="9">
    <location>
        <begin position="268"/>
        <end position="280"/>
    </location>
</feature>
<feature type="strand" evidence="9">
    <location>
        <begin position="283"/>
        <end position="291"/>
    </location>
</feature>
<feature type="helix" evidence="9">
    <location>
        <begin position="298"/>
        <end position="300"/>
    </location>
</feature>
<feature type="turn" evidence="9">
    <location>
        <begin position="301"/>
        <end position="306"/>
    </location>
</feature>
<feature type="strand" evidence="9">
    <location>
        <begin position="315"/>
        <end position="319"/>
    </location>
</feature>
<feature type="helix" evidence="9">
    <location>
        <begin position="320"/>
        <end position="324"/>
    </location>
</feature>
<feature type="strand" evidence="9">
    <location>
        <begin position="326"/>
        <end position="328"/>
    </location>
</feature>
<feature type="helix" evidence="9">
    <location>
        <begin position="330"/>
        <end position="342"/>
    </location>
</feature>
<feature type="helix" evidence="9">
    <location>
        <begin position="345"/>
        <end position="354"/>
    </location>
</feature>
<comment type="function">
    <text evidence="4 5">E3 ubiquitin-protein ligase that mediates the formation of 'Lys-63'-linked ubiquitin chains. Regulates apical dominance by acting on the auxin transport proteins abundance (PubMed:17586653). Mediates ubiquitination and subsequent proteasomal degradation of ERF053 in response to drought stress. Acts as a negative regulator of drought stress response (PubMed:22095047).</text>
</comment>
<comment type="catalytic activity">
    <reaction evidence="7">
        <text>S-ubiquitinyl-[E2 ubiquitin-conjugating enzyme]-L-cysteine + [acceptor protein]-L-lysine = [E2 ubiquitin-conjugating enzyme]-L-cysteine + N(6)-ubiquitinyl-[acceptor protein]-L-lysine.</text>
        <dbReference type="EC" id="2.3.2.27"/>
    </reaction>
</comment>
<comment type="subunit">
    <text evidence="4 5">Interacts with the heterodimer UBC35/UEV1B, UBC35 alone, PIN1, but not with UCB2, UCB9, UEV1B or UEV1C alone (PubMed:17586653). Interacts with ERF053 (PubMed:22095047).</text>
</comment>
<comment type="subcellular location">
    <subcellularLocation>
        <location evidence="7">Cell membrane</location>
        <topology evidence="7">Lipid-anchor</topology>
    </subcellularLocation>
    <subcellularLocation>
        <location evidence="5">Nucleus</location>
    </subcellularLocation>
    <text evidence="5">Translocates to the nucleus under salt stress.</text>
</comment>
<comment type="tissue specificity">
    <text evidence="4">Ubiquitously expressed.</text>
</comment>
<comment type="domain">
    <text>A C-terminal fragment containing the RING domain interacts with UBC35 while the full-length protein does not.</text>
</comment>
<comment type="PTM">
    <text evidence="4">N-myristoylated.</text>
</comment>
<comment type="disruption phenotype">
    <text evidence="4 5">No visible phenotype; due to the redundancy with RGLG1 (PubMed:17586653, PubMed:22095047). Rglg1 and rglg2 double mutants show a complete loss of apical dominance (PubMed:17586653). The double mutant seedlings rglg1 and rglg2 exhibit a dehydration-tolerant phenotype (PubMed:22095047).</text>
</comment>